<keyword id="KW-0028">Amino-acid biosynthesis</keyword>
<keyword id="KW-0963">Cytoplasm</keyword>
<keyword id="KW-0413">Isomerase</keyword>
<keyword id="KW-0457">Lysine biosynthesis</keyword>
<gene>
    <name evidence="1" type="primary">dapF</name>
    <name type="ordered locus">lin2126</name>
</gene>
<dbReference type="EC" id="5.1.1.7" evidence="1"/>
<dbReference type="EMBL" id="AL596171">
    <property type="protein sequence ID" value="CAC97356.1"/>
    <property type="molecule type" value="Genomic_DNA"/>
</dbReference>
<dbReference type="PIR" id="AD1698">
    <property type="entry name" value="AD1698"/>
</dbReference>
<dbReference type="RefSeq" id="WP_003769564.1">
    <property type="nucleotide sequence ID" value="NC_003212.1"/>
</dbReference>
<dbReference type="SMR" id="Q929Z7"/>
<dbReference type="STRING" id="272626.gene:17566484"/>
<dbReference type="GeneID" id="93235465"/>
<dbReference type="KEGG" id="lin:lin2126"/>
<dbReference type="eggNOG" id="COG0253">
    <property type="taxonomic scope" value="Bacteria"/>
</dbReference>
<dbReference type="HOGENOM" id="CLU_053306_3_1_9"/>
<dbReference type="OrthoDB" id="9805408at2"/>
<dbReference type="UniPathway" id="UPA00034">
    <property type="reaction ID" value="UER00025"/>
</dbReference>
<dbReference type="Proteomes" id="UP000002513">
    <property type="component" value="Chromosome"/>
</dbReference>
<dbReference type="GO" id="GO:0005829">
    <property type="term" value="C:cytosol"/>
    <property type="evidence" value="ECO:0007669"/>
    <property type="project" value="TreeGrafter"/>
</dbReference>
<dbReference type="GO" id="GO:0008837">
    <property type="term" value="F:diaminopimelate epimerase activity"/>
    <property type="evidence" value="ECO:0007669"/>
    <property type="project" value="UniProtKB-UniRule"/>
</dbReference>
<dbReference type="GO" id="GO:0009089">
    <property type="term" value="P:lysine biosynthetic process via diaminopimelate"/>
    <property type="evidence" value="ECO:0007669"/>
    <property type="project" value="UniProtKB-UniRule"/>
</dbReference>
<dbReference type="FunFam" id="3.10.310.10:FF:000021">
    <property type="entry name" value="Diaminopimelate epimerase"/>
    <property type="match status" value="1"/>
</dbReference>
<dbReference type="FunFam" id="3.10.310.10:FF:000022">
    <property type="entry name" value="Diaminopimelate epimerase"/>
    <property type="match status" value="1"/>
</dbReference>
<dbReference type="Gene3D" id="3.10.310.10">
    <property type="entry name" value="Diaminopimelate Epimerase, Chain A, domain 1"/>
    <property type="match status" value="2"/>
</dbReference>
<dbReference type="HAMAP" id="MF_00197">
    <property type="entry name" value="DAP_epimerase"/>
    <property type="match status" value="1"/>
</dbReference>
<dbReference type="InterPro" id="IPR018510">
    <property type="entry name" value="DAP_epimerase_AS"/>
</dbReference>
<dbReference type="InterPro" id="IPR001653">
    <property type="entry name" value="DAP_epimerase_DapF"/>
</dbReference>
<dbReference type="NCBIfam" id="TIGR00652">
    <property type="entry name" value="DapF"/>
    <property type="match status" value="1"/>
</dbReference>
<dbReference type="PANTHER" id="PTHR31689:SF0">
    <property type="entry name" value="DIAMINOPIMELATE EPIMERASE"/>
    <property type="match status" value="1"/>
</dbReference>
<dbReference type="PANTHER" id="PTHR31689">
    <property type="entry name" value="DIAMINOPIMELATE EPIMERASE, CHLOROPLASTIC"/>
    <property type="match status" value="1"/>
</dbReference>
<dbReference type="Pfam" id="PF01678">
    <property type="entry name" value="DAP_epimerase"/>
    <property type="match status" value="2"/>
</dbReference>
<dbReference type="SUPFAM" id="SSF54506">
    <property type="entry name" value="Diaminopimelate epimerase-like"/>
    <property type="match status" value="2"/>
</dbReference>
<dbReference type="PROSITE" id="PS01326">
    <property type="entry name" value="DAP_EPIMERASE"/>
    <property type="match status" value="1"/>
</dbReference>
<name>DAPF_LISIN</name>
<proteinExistence type="inferred from homology"/>
<organism>
    <name type="scientific">Listeria innocua serovar 6a (strain ATCC BAA-680 / CLIP 11262)</name>
    <dbReference type="NCBI Taxonomy" id="272626"/>
    <lineage>
        <taxon>Bacteria</taxon>
        <taxon>Bacillati</taxon>
        <taxon>Bacillota</taxon>
        <taxon>Bacilli</taxon>
        <taxon>Bacillales</taxon>
        <taxon>Listeriaceae</taxon>
        <taxon>Listeria</taxon>
    </lineage>
</organism>
<feature type="chain" id="PRO_0000149849" description="Diaminopimelate epimerase">
    <location>
        <begin position="1"/>
        <end position="329"/>
    </location>
</feature>
<feature type="active site" description="Proton donor" evidence="1">
    <location>
        <position position="82"/>
    </location>
</feature>
<feature type="active site" description="Proton acceptor" evidence="1">
    <location>
        <position position="233"/>
    </location>
</feature>
<feature type="binding site" evidence="1">
    <location>
        <position position="14"/>
    </location>
    <ligand>
        <name>substrate</name>
    </ligand>
</feature>
<feature type="binding site" evidence="1">
    <location>
        <position position="73"/>
    </location>
    <ligand>
        <name>substrate</name>
    </ligand>
</feature>
<feature type="binding site" evidence="1">
    <location>
        <begin position="83"/>
        <end position="84"/>
    </location>
    <ligand>
        <name>substrate</name>
    </ligand>
</feature>
<feature type="binding site" evidence="1">
    <location>
        <position position="170"/>
    </location>
    <ligand>
        <name>substrate</name>
    </ligand>
</feature>
<feature type="binding site" evidence="1">
    <location>
        <position position="206"/>
    </location>
    <ligand>
        <name>substrate</name>
    </ligand>
</feature>
<feature type="binding site" evidence="1">
    <location>
        <begin position="224"/>
        <end position="225"/>
    </location>
    <ligand>
        <name>substrate</name>
    </ligand>
</feature>
<feature type="binding site" evidence="1">
    <location>
        <begin position="234"/>
        <end position="235"/>
    </location>
    <ligand>
        <name>substrate</name>
    </ligand>
</feature>
<feature type="site" description="Could be important to modulate the pK values of the two catalytic cysteine residues" evidence="1">
    <location>
        <position position="172"/>
    </location>
</feature>
<feature type="site" description="Could be important to modulate the pK values of the two catalytic cysteine residues" evidence="1">
    <location>
        <position position="224"/>
    </location>
</feature>
<reference key="1">
    <citation type="journal article" date="2001" name="Science">
        <title>Comparative genomics of Listeria species.</title>
        <authorList>
            <person name="Glaser P."/>
            <person name="Frangeul L."/>
            <person name="Buchrieser C."/>
            <person name="Rusniok C."/>
            <person name="Amend A."/>
            <person name="Baquero F."/>
            <person name="Berche P."/>
            <person name="Bloecker H."/>
            <person name="Brandt P."/>
            <person name="Chakraborty T."/>
            <person name="Charbit A."/>
            <person name="Chetouani F."/>
            <person name="Couve E."/>
            <person name="de Daruvar A."/>
            <person name="Dehoux P."/>
            <person name="Domann E."/>
            <person name="Dominguez-Bernal G."/>
            <person name="Duchaud E."/>
            <person name="Durant L."/>
            <person name="Dussurget O."/>
            <person name="Entian K.-D."/>
            <person name="Fsihi H."/>
            <person name="Garcia-del Portillo F."/>
            <person name="Garrido P."/>
            <person name="Gautier L."/>
            <person name="Goebel W."/>
            <person name="Gomez-Lopez N."/>
            <person name="Hain T."/>
            <person name="Hauf J."/>
            <person name="Jackson D."/>
            <person name="Jones L.-M."/>
            <person name="Kaerst U."/>
            <person name="Kreft J."/>
            <person name="Kuhn M."/>
            <person name="Kunst F."/>
            <person name="Kurapkat G."/>
            <person name="Madueno E."/>
            <person name="Maitournam A."/>
            <person name="Mata Vicente J."/>
            <person name="Ng E."/>
            <person name="Nedjari H."/>
            <person name="Nordsiek G."/>
            <person name="Novella S."/>
            <person name="de Pablos B."/>
            <person name="Perez-Diaz J.-C."/>
            <person name="Purcell R."/>
            <person name="Remmel B."/>
            <person name="Rose M."/>
            <person name="Schlueter T."/>
            <person name="Simoes N."/>
            <person name="Tierrez A."/>
            <person name="Vazquez-Boland J.-A."/>
            <person name="Voss H."/>
            <person name="Wehland J."/>
            <person name="Cossart P."/>
        </authorList>
    </citation>
    <scope>NUCLEOTIDE SEQUENCE [LARGE SCALE GENOMIC DNA]</scope>
    <source>
        <strain>ATCC BAA-680 / CLIP 11262</strain>
    </source>
</reference>
<protein>
    <recommendedName>
        <fullName evidence="1">Diaminopimelate epimerase</fullName>
        <shortName evidence="1">DAP epimerase</shortName>
        <ecNumber evidence="1">5.1.1.7</ecNumber>
    </recommendedName>
    <alternativeName>
        <fullName evidence="1">PLP-independent amino acid racemase</fullName>
    </alternativeName>
</protein>
<sequence length="329" mass="36182">MATIHFTKVHGSQNDFFLVDEEENQIMDWSDAKRADFAIKLCDREHSLGGADGILYVTKSNEAGPIGQMRVVNSDGSIASMCGNGLRTVARYLLEKHALTEAKVETMKAILDVKKATSLGFDIPTYQVEISPVKFNAESLPMNVGVEKLFNQVVPELDSELAFSAVSVPNPHLITFVDQTVLDSDKQETLASYLNSENPYFPDGVNVSFVKRLSDDAIYVRTFERGVGFTNACGTAMSACSLIKKMLDKDTFETPLNVYNDGGRVQVTAKKDEAGEISLQLIGNATFVSTGSVSYERGTVTELTNEATPEQAQYQELVKEVKQFLKTTE</sequence>
<comment type="function">
    <text evidence="1">Catalyzes the stereoinversion of LL-2,6-diaminopimelate (L,L-DAP) to meso-diaminopimelate (meso-DAP), a precursor of L-lysine and an essential component of the bacterial peptidoglycan.</text>
</comment>
<comment type="catalytic activity">
    <reaction evidence="1">
        <text>(2S,6S)-2,6-diaminopimelate = meso-2,6-diaminopimelate</text>
        <dbReference type="Rhea" id="RHEA:15393"/>
        <dbReference type="ChEBI" id="CHEBI:57609"/>
        <dbReference type="ChEBI" id="CHEBI:57791"/>
        <dbReference type="EC" id="5.1.1.7"/>
    </reaction>
</comment>
<comment type="pathway">
    <text evidence="1">Amino-acid biosynthesis; L-lysine biosynthesis via DAP pathway; DL-2,6-diaminopimelate from LL-2,6-diaminopimelate: step 1/1.</text>
</comment>
<comment type="subunit">
    <text evidence="1">Homodimer.</text>
</comment>
<comment type="subcellular location">
    <subcellularLocation>
        <location evidence="1">Cytoplasm</location>
    </subcellularLocation>
</comment>
<comment type="similarity">
    <text evidence="1">Belongs to the diaminopimelate epimerase family.</text>
</comment>
<evidence type="ECO:0000255" key="1">
    <source>
        <dbReference type="HAMAP-Rule" id="MF_00197"/>
    </source>
</evidence>
<accession>Q929Z7</accession>